<accession>B7GNM6</accession>
<accession>E8MNW0</accession>
<dbReference type="EC" id="4.2.1.33" evidence="1"/>
<dbReference type="EMBL" id="CP001095">
    <property type="protein sequence ID" value="ACJ53382.1"/>
    <property type="molecule type" value="Genomic_DNA"/>
</dbReference>
<dbReference type="EMBL" id="AP010889">
    <property type="protein sequence ID" value="BAJ69976.1"/>
    <property type="molecule type" value="Genomic_DNA"/>
</dbReference>
<dbReference type="RefSeq" id="WP_012578552.1">
    <property type="nucleotide sequence ID" value="NZ_JDTT01000025.1"/>
</dbReference>
<dbReference type="SMR" id="B7GNM6"/>
<dbReference type="KEGG" id="bln:Blon_2324"/>
<dbReference type="KEGG" id="blon:BLIJ_2399"/>
<dbReference type="PATRIC" id="fig|391904.8.peg.2401"/>
<dbReference type="HOGENOM" id="CLU_081378_0_1_11"/>
<dbReference type="UniPathway" id="UPA00048">
    <property type="reaction ID" value="UER00071"/>
</dbReference>
<dbReference type="Proteomes" id="UP000001360">
    <property type="component" value="Chromosome"/>
</dbReference>
<dbReference type="GO" id="GO:0009316">
    <property type="term" value="C:3-isopropylmalate dehydratase complex"/>
    <property type="evidence" value="ECO:0007669"/>
    <property type="project" value="InterPro"/>
</dbReference>
<dbReference type="GO" id="GO:0003861">
    <property type="term" value="F:3-isopropylmalate dehydratase activity"/>
    <property type="evidence" value="ECO:0007669"/>
    <property type="project" value="UniProtKB-UniRule"/>
</dbReference>
<dbReference type="GO" id="GO:0009098">
    <property type="term" value="P:L-leucine biosynthetic process"/>
    <property type="evidence" value="ECO:0007669"/>
    <property type="project" value="UniProtKB-UniRule"/>
</dbReference>
<dbReference type="CDD" id="cd01577">
    <property type="entry name" value="IPMI_Swivel"/>
    <property type="match status" value="1"/>
</dbReference>
<dbReference type="FunFam" id="3.20.19.10:FF:000003">
    <property type="entry name" value="3-isopropylmalate dehydratase small subunit"/>
    <property type="match status" value="1"/>
</dbReference>
<dbReference type="Gene3D" id="3.20.19.10">
    <property type="entry name" value="Aconitase, domain 4"/>
    <property type="match status" value="1"/>
</dbReference>
<dbReference type="HAMAP" id="MF_01031">
    <property type="entry name" value="LeuD_type1"/>
    <property type="match status" value="1"/>
</dbReference>
<dbReference type="InterPro" id="IPR004431">
    <property type="entry name" value="3-IsopropMal_deHydase_ssu"/>
</dbReference>
<dbReference type="InterPro" id="IPR015928">
    <property type="entry name" value="Aconitase/3IPM_dehydase_swvl"/>
</dbReference>
<dbReference type="InterPro" id="IPR000573">
    <property type="entry name" value="AconitaseA/IPMdHydase_ssu_swvl"/>
</dbReference>
<dbReference type="InterPro" id="IPR033940">
    <property type="entry name" value="IPMI_Swivel"/>
</dbReference>
<dbReference type="InterPro" id="IPR050075">
    <property type="entry name" value="LeuD"/>
</dbReference>
<dbReference type="NCBIfam" id="TIGR00171">
    <property type="entry name" value="leuD"/>
    <property type="match status" value="1"/>
</dbReference>
<dbReference type="NCBIfam" id="NF002458">
    <property type="entry name" value="PRK01641.1"/>
    <property type="match status" value="1"/>
</dbReference>
<dbReference type="PANTHER" id="PTHR43345:SF5">
    <property type="entry name" value="3-ISOPROPYLMALATE DEHYDRATASE SMALL SUBUNIT"/>
    <property type="match status" value="1"/>
</dbReference>
<dbReference type="PANTHER" id="PTHR43345">
    <property type="entry name" value="3-ISOPROPYLMALATE DEHYDRATASE SMALL SUBUNIT 2-RELATED-RELATED"/>
    <property type="match status" value="1"/>
</dbReference>
<dbReference type="Pfam" id="PF00694">
    <property type="entry name" value="Aconitase_C"/>
    <property type="match status" value="1"/>
</dbReference>
<dbReference type="SUPFAM" id="SSF52016">
    <property type="entry name" value="LeuD/IlvD-like"/>
    <property type="match status" value="1"/>
</dbReference>
<gene>
    <name evidence="1" type="primary">leuD</name>
    <name type="ordered locus">Blon_2324</name>
    <name type="ordered locus">BLIJ_2399</name>
</gene>
<protein>
    <recommendedName>
        <fullName evidence="1">3-isopropylmalate dehydratase small subunit</fullName>
        <ecNumber evidence="1">4.2.1.33</ecNumber>
    </recommendedName>
    <alternativeName>
        <fullName evidence="1">Alpha-IPM isomerase</fullName>
        <shortName evidence="1">IPMI</shortName>
    </alternativeName>
    <alternativeName>
        <fullName evidence="1">Isopropylmalate isomerase</fullName>
    </alternativeName>
</protein>
<sequence length="229" mass="25961">MEKLTTLTGVGVPLRRSNVDTDQIIPAVFLKRVTKSGFDDALFYAWRRDPNFVLNKPEYAGKGQILVAGPEFGIGSSREHAVWALHDYGFRVVIAPSFADIFYGNTAKNGVLAAIMPQESVELLWKLLEEEPGREMTVSLETRTVTCGDVTLPFEVNDYVRWRLMNGYDDIDLTLQHEDDIAAYEKMRAEKFPFKPKTIPAKHWPEEKIESAREPDDDWTGPLADRGII</sequence>
<name>LEUD_BIFLS</name>
<reference key="1">
    <citation type="journal article" date="2008" name="Proc. Natl. Acad. Sci. U.S.A.">
        <title>The genome sequence of Bifidobacterium longum subsp. infantis reveals adaptations for milk utilization within the infant microbiome.</title>
        <authorList>
            <person name="Sela D.A."/>
            <person name="Chapman J."/>
            <person name="Adeuya A."/>
            <person name="Kim J.H."/>
            <person name="Chen F."/>
            <person name="Whitehead T.R."/>
            <person name="Lapidus A."/>
            <person name="Rokhsar D.S."/>
            <person name="Lebrilla C.B."/>
            <person name="German J.B."/>
            <person name="Price N.P."/>
            <person name="Richardson P.M."/>
            <person name="Mills D.A."/>
        </authorList>
    </citation>
    <scope>NUCLEOTIDE SEQUENCE [LARGE SCALE GENOMIC DNA]</scope>
    <source>
        <strain>ATCC 15697 / DSM 20088 / JCM 1222 / NCTC 11817 / S12</strain>
    </source>
</reference>
<reference key="2">
    <citation type="journal article" date="2011" name="Nature">
        <title>Bifidobacteria can protect from enteropathogenic infection through production of acetate.</title>
        <authorList>
            <person name="Fukuda S."/>
            <person name="Toh H."/>
            <person name="Hase K."/>
            <person name="Oshima K."/>
            <person name="Nakanishi Y."/>
            <person name="Yoshimura K."/>
            <person name="Tobe T."/>
            <person name="Clarke J.M."/>
            <person name="Topping D.L."/>
            <person name="Suzuki T."/>
            <person name="Taylor T.D."/>
            <person name="Itoh K."/>
            <person name="Kikuchi J."/>
            <person name="Morita H."/>
            <person name="Hattori M."/>
            <person name="Ohno H."/>
        </authorList>
    </citation>
    <scope>NUCLEOTIDE SEQUENCE [LARGE SCALE GENOMIC DNA]</scope>
    <source>
        <strain>ATCC 15697 / DSM 20088 / JCM 1222 / NCTC 11817 / S12</strain>
    </source>
</reference>
<keyword id="KW-0028">Amino-acid biosynthesis</keyword>
<keyword id="KW-0100">Branched-chain amino acid biosynthesis</keyword>
<keyword id="KW-0432">Leucine biosynthesis</keyword>
<keyword id="KW-0456">Lyase</keyword>
<proteinExistence type="inferred from homology"/>
<evidence type="ECO:0000255" key="1">
    <source>
        <dbReference type="HAMAP-Rule" id="MF_01031"/>
    </source>
</evidence>
<evidence type="ECO:0000256" key="2">
    <source>
        <dbReference type="SAM" id="MobiDB-lite"/>
    </source>
</evidence>
<organism>
    <name type="scientific">Bifidobacterium longum subsp. infantis (strain ATCC 15697 / DSM 20088 / JCM 1222 / NCTC 11817 / S12)</name>
    <dbReference type="NCBI Taxonomy" id="391904"/>
    <lineage>
        <taxon>Bacteria</taxon>
        <taxon>Bacillati</taxon>
        <taxon>Actinomycetota</taxon>
        <taxon>Actinomycetes</taxon>
        <taxon>Bifidobacteriales</taxon>
        <taxon>Bifidobacteriaceae</taxon>
        <taxon>Bifidobacterium</taxon>
    </lineage>
</organism>
<comment type="function">
    <text evidence="1">Catalyzes the isomerization between 2-isopropylmalate and 3-isopropylmalate, via the formation of 2-isopropylmaleate.</text>
</comment>
<comment type="catalytic activity">
    <reaction evidence="1">
        <text>(2R,3S)-3-isopropylmalate = (2S)-2-isopropylmalate</text>
        <dbReference type="Rhea" id="RHEA:32287"/>
        <dbReference type="ChEBI" id="CHEBI:1178"/>
        <dbReference type="ChEBI" id="CHEBI:35121"/>
        <dbReference type="EC" id="4.2.1.33"/>
    </reaction>
</comment>
<comment type="pathway">
    <text evidence="1">Amino-acid biosynthesis; L-leucine biosynthesis; L-leucine from 3-methyl-2-oxobutanoate: step 2/4.</text>
</comment>
<comment type="subunit">
    <text evidence="1">Heterodimer of LeuC and LeuD.</text>
</comment>
<comment type="similarity">
    <text evidence="1">Belongs to the LeuD family. LeuD type 1 subfamily.</text>
</comment>
<feature type="chain" id="PRO_1000149404" description="3-isopropylmalate dehydratase small subunit">
    <location>
        <begin position="1"/>
        <end position="229"/>
    </location>
</feature>
<feature type="region of interest" description="Disordered" evidence="2">
    <location>
        <begin position="208"/>
        <end position="229"/>
    </location>
</feature>